<comment type="function">
    <text evidence="1">Catalyzes the conversion of D-ribulose 5-phosphate to formate and 3,4-dihydroxy-2-butanone 4-phosphate.</text>
</comment>
<comment type="function">
    <text evidence="1">Catalyzes the conversion of GTP to 2,5-diamino-6-ribosylamino-4(3H)-pyrimidinone 5'-phosphate (DARP), formate and pyrophosphate.</text>
</comment>
<comment type="catalytic activity">
    <reaction evidence="1">
        <text>D-ribulose 5-phosphate = (2S)-2-hydroxy-3-oxobutyl phosphate + formate + H(+)</text>
        <dbReference type="Rhea" id="RHEA:18457"/>
        <dbReference type="ChEBI" id="CHEBI:15378"/>
        <dbReference type="ChEBI" id="CHEBI:15740"/>
        <dbReference type="ChEBI" id="CHEBI:58121"/>
        <dbReference type="ChEBI" id="CHEBI:58830"/>
        <dbReference type="EC" id="4.1.99.12"/>
    </reaction>
</comment>
<comment type="catalytic activity">
    <reaction evidence="1">
        <text>GTP + 4 H2O = 2,5-diamino-6-hydroxy-4-(5-phosphoribosylamino)-pyrimidine + formate + 2 phosphate + 3 H(+)</text>
        <dbReference type="Rhea" id="RHEA:23704"/>
        <dbReference type="ChEBI" id="CHEBI:15377"/>
        <dbReference type="ChEBI" id="CHEBI:15378"/>
        <dbReference type="ChEBI" id="CHEBI:15740"/>
        <dbReference type="ChEBI" id="CHEBI:37565"/>
        <dbReference type="ChEBI" id="CHEBI:43474"/>
        <dbReference type="ChEBI" id="CHEBI:58614"/>
        <dbReference type="EC" id="3.5.4.25"/>
    </reaction>
</comment>
<comment type="cofactor">
    <cofactor evidence="1">
        <name>Mg(2+)</name>
        <dbReference type="ChEBI" id="CHEBI:18420"/>
    </cofactor>
    <cofactor evidence="1">
        <name>Mn(2+)</name>
        <dbReference type="ChEBI" id="CHEBI:29035"/>
    </cofactor>
    <text evidence="1">Binds 2 divalent metal cations per subunit. Magnesium or manganese.</text>
</comment>
<comment type="cofactor">
    <cofactor evidence="1">
        <name>Zn(2+)</name>
        <dbReference type="ChEBI" id="CHEBI:29105"/>
    </cofactor>
    <text evidence="1">Binds 1 zinc ion per subunit.</text>
</comment>
<comment type="pathway">
    <text evidence="1">Cofactor biosynthesis; riboflavin biosynthesis; 2-hydroxy-3-oxobutyl phosphate from D-ribulose 5-phosphate: step 1/1.</text>
</comment>
<comment type="pathway">
    <text evidence="1">Cofactor biosynthesis; riboflavin biosynthesis; 5-amino-6-(D-ribitylamino)uracil from GTP: step 1/4.</text>
</comment>
<comment type="similarity">
    <text evidence="1">In the N-terminal section; belongs to the DHBP synthase family.</text>
</comment>
<comment type="similarity">
    <text evidence="1">In the C-terminal section; belongs to the GTP cyclohydrolase II family.</text>
</comment>
<keyword id="KW-0342">GTP-binding</keyword>
<keyword id="KW-0378">Hydrolase</keyword>
<keyword id="KW-0456">Lyase</keyword>
<keyword id="KW-0460">Magnesium</keyword>
<keyword id="KW-0464">Manganese</keyword>
<keyword id="KW-0479">Metal-binding</keyword>
<keyword id="KW-0511">Multifunctional enzyme</keyword>
<keyword id="KW-0547">Nucleotide-binding</keyword>
<keyword id="KW-1185">Reference proteome</keyword>
<keyword id="KW-0686">Riboflavin biosynthesis</keyword>
<keyword id="KW-0862">Zinc</keyword>
<reference key="1">
    <citation type="journal article" date="2009" name="PLoS ONE">
        <title>Non mycobacterial virulence genes in the genome of the emerging pathogen Mycobacterium abscessus.</title>
        <authorList>
            <person name="Ripoll F."/>
            <person name="Pasek S."/>
            <person name="Schenowitz C."/>
            <person name="Dossat C."/>
            <person name="Barbe V."/>
            <person name="Rottman M."/>
            <person name="Macheras E."/>
            <person name="Heym B."/>
            <person name="Herrmann J.L."/>
            <person name="Daffe M."/>
            <person name="Brosch R."/>
            <person name="Risler J.L."/>
            <person name="Gaillard J.L."/>
        </authorList>
    </citation>
    <scope>NUCLEOTIDE SEQUENCE [LARGE SCALE GENOMIC DNA]</scope>
    <source>
        <strain>ATCC 19977 / DSM 44196 / CCUG 20993 / CIP 104536 / JCM 13569 / NCTC 13031 / TMC 1543 / L948</strain>
    </source>
</reference>
<sequence>MTRLDSIERAVADIAAGKAVVVVDDEDRENEGDLIFAAEKATPELVAFMVRYTSGYLCVPLAGEDCDRLGLLPQYAVNQDKHGTAYTVTVDAKNGIGTGISASDRAATMRLLADAASTADDFTKPGHVVPLRAKDGGVLRRPGHTEASVDLAKLAGLRPAAVICEIVSQKDEGAMAQTEELRVFADEHNLALVSIADLIEWRRKHEKHVQRIAEARIPTQHGEFRAVGYTSIYDDVEHVALVLGDISGPDGDGNDVLVRVHSECLTGDVFGSRRCDCGPQLDAAMEMVAKEGRGIVLYMRGHEGRGIGLMHKLQAYQLQDAGEDTVDANLKLGLPADARDYGLGAQILVDLGVKSMRLLTNNPAKRVGLDGYGLHIIERVPLPVRANSENIRYLRTKRDRMGHDLADLDDHPEADGA</sequence>
<proteinExistence type="inferred from homology"/>
<dbReference type="EC" id="4.1.99.12" evidence="1"/>
<dbReference type="EC" id="3.5.4.25" evidence="1"/>
<dbReference type="EMBL" id="CU458896">
    <property type="protein sequence ID" value="CAM62875.1"/>
    <property type="molecule type" value="Genomic_DNA"/>
</dbReference>
<dbReference type="RefSeq" id="WP_005057753.1">
    <property type="nucleotide sequence ID" value="NZ_MLCG01000003.1"/>
</dbReference>
<dbReference type="SMR" id="B1MCA4"/>
<dbReference type="GeneID" id="93379727"/>
<dbReference type="KEGG" id="mab:MAB_2796c"/>
<dbReference type="UniPathway" id="UPA00275">
    <property type="reaction ID" value="UER00399"/>
</dbReference>
<dbReference type="UniPathway" id="UPA00275">
    <property type="reaction ID" value="UER00400"/>
</dbReference>
<dbReference type="Proteomes" id="UP000007137">
    <property type="component" value="Chromosome"/>
</dbReference>
<dbReference type="GO" id="GO:0005829">
    <property type="term" value="C:cytosol"/>
    <property type="evidence" value="ECO:0007669"/>
    <property type="project" value="TreeGrafter"/>
</dbReference>
<dbReference type="GO" id="GO:0008686">
    <property type="term" value="F:3,4-dihydroxy-2-butanone-4-phosphate synthase activity"/>
    <property type="evidence" value="ECO:0007669"/>
    <property type="project" value="UniProtKB-UniRule"/>
</dbReference>
<dbReference type="GO" id="GO:0005525">
    <property type="term" value="F:GTP binding"/>
    <property type="evidence" value="ECO:0007669"/>
    <property type="project" value="UniProtKB-KW"/>
</dbReference>
<dbReference type="GO" id="GO:0003935">
    <property type="term" value="F:GTP cyclohydrolase II activity"/>
    <property type="evidence" value="ECO:0007669"/>
    <property type="project" value="UniProtKB-UniRule"/>
</dbReference>
<dbReference type="GO" id="GO:0000287">
    <property type="term" value="F:magnesium ion binding"/>
    <property type="evidence" value="ECO:0007669"/>
    <property type="project" value="UniProtKB-UniRule"/>
</dbReference>
<dbReference type="GO" id="GO:0030145">
    <property type="term" value="F:manganese ion binding"/>
    <property type="evidence" value="ECO:0007669"/>
    <property type="project" value="UniProtKB-UniRule"/>
</dbReference>
<dbReference type="GO" id="GO:0008270">
    <property type="term" value="F:zinc ion binding"/>
    <property type="evidence" value="ECO:0007669"/>
    <property type="project" value="UniProtKB-UniRule"/>
</dbReference>
<dbReference type="GO" id="GO:0009231">
    <property type="term" value="P:riboflavin biosynthetic process"/>
    <property type="evidence" value="ECO:0007669"/>
    <property type="project" value="UniProtKB-UniRule"/>
</dbReference>
<dbReference type="CDD" id="cd00641">
    <property type="entry name" value="GTP_cyclohydro2"/>
    <property type="match status" value="1"/>
</dbReference>
<dbReference type="FunFam" id="3.40.50.10990:FF:000001">
    <property type="entry name" value="Riboflavin biosynthesis protein RibBA"/>
    <property type="match status" value="1"/>
</dbReference>
<dbReference type="FunFam" id="3.90.870.10:FF:000001">
    <property type="entry name" value="Riboflavin biosynthesis protein RibBA"/>
    <property type="match status" value="1"/>
</dbReference>
<dbReference type="Gene3D" id="3.90.870.10">
    <property type="entry name" value="DHBP synthase"/>
    <property type="match status" value="1"/>
</dbReference>
<dbReference type="Gene3D" id="3.40.50.10990">
    <property type="entry name" value="GTP cyclohydrolase II"/>
    <property type="match status" value="1"/>
</dbReference>
<dbReference type="HAMAP" id="MF_00179">
    <property type="entry name" value="RibA"/>
    <property type="match status" value="1"/>
</dbReference>
<dbReference type="HAMAP" id="MF_00180">
    <property type="entry name" value="RibB"/>
    <property type="match status" value="1"/>
</dbReference>
<dbReference type="HAMAP" id="MF_01283">
    <property type="entry name" value="RibBA"/>
    <property type="match status" value="1"/>
</dbReference>
<dbReference type="InterPro" id="IPR017945">
    <property type="entry name" value="DHBP_synth_RibB-like_a/b_dom"/>
</dbReference>
<dbReference type="InterPro" id="IPR000422">
    <property type="entry name" value="DHBP_synthase_RibB"/>
</dbReference>
<dbReference type="InterPro" id="IPR032677">
    <property type="entry name" value="GTP_cyclohydro_II"/>
</dbReference>
<dbReference type="InterPro" id="IPR000926">
    <property type="entry name" value="RibA"/>
</dbReference>
<dbReference type="InterPro" id="IPR036144">
    <property type="entry name" value="RibA-like_sf"/>
</dbReference>
<dbReference type="InterPro" id="IPR016299">
    <property type="entry name" value="Riboflavin_synth_RibBA"/>
</dbReference>
<dbReference type="NCBIfam" id="NF001591">
    <property type="entry name" value="PRK00393.1"/>
    <property type="match status" value="1"/>
</dbReference>
<dbReference type="NCBIfam" id="NF006803">
    <property type="entry name" value="PRK09311.1"/>
    <property type="match status" value="1"/>
</dbReference>
<dbReference type="NCBIfam" id="TIGR00505">
    <property type="entry name" value="ribA"/>
    <property type="match status" value="1"/>
</dbReference>
<dbReference type="NCBIfam" id="TIGR00506">
    <property type="entry name" value="ribB"/>
    <property type="match status" value="1"/>
</dbReference>
<dbReference type="PANTHER" id="PTHR21327:SF18">
    <property type="entry name" value="3,4-DIHYDROXY-2-BUTANONE 4-PHOSPHATE SYNTHASE"/>
    <property type="match status" value="1"/>
</dbReference>
<dbReference type="PANTHER" id="PTHR21327">
    <property type="entry name" value="GTP CYCLOHYDROLASE II-RELATED"/>
    <property type="match status" value="1"/>
</dbReference>
<dbReference type="Pfam" id="PF00926">
    <property type="entry name" value="DHBP_synthase"/>
    <property type="match status" value="1"/>
</dbReference>
<dbReference type="Pfam" id="PF00925">
    <property type="entry name" value="GTP_cyclohydro2"/>
    <property type="match status" value="1"/>
</dbReference>
<dbReference type="PIRSF" id="PIRSF001259">
    <property type="entry name" value="RibA"/>
    <property type="match status" value="1"/>
</dbReference>
<dbReference type="SUPFAM" id="SSF142695">
    <property type="entry name" value="RibA-like"/>
    <property type="match status" value="1"/>
</dbReference>
<dbReference type="SUPFAM" id="SSF55821">
    <property type="entry name" value="YrdC/RibB"/>
    <property type="match status" value="1"/>
</dbReference>
<feature type="chain" id="PRO_1000140365" description="Riboflavin biosynthesis protein RibBA">
    <location>
        <begin position="1"/>
        <end position="417"/>
    </location>
</feature>
<feature type="region of interest" description="DHBP synthase">
    <location>
        <begin position="1"/>
        <end position="204"/>
    </location>
</feature>
<feature type="region of interest" description="GTP cyclohydrolase II">
    <location>
        <begin position="205"/>
        <end position="417"/>
    </location>
</feature>
<feature type="active site" description="Proton acceptor; for GTP cyclohydrolase activity" evidence="1">
    <location>
        <position position="337"/>
    </location>
</feature>
<feature type="active site" description="Nucleophile; for GTP cyclohydrolase activity" evidence="1">
    <location>
        <position position="339"/>
    </location>
</feature>
<feature type="binding site" evidence="1">
    <location>
        <begin position="28"/>
        <end position="29"/>
    </location>
    <ligand>
        <name>D-ribulose 5-phosphate</name>
        <dbReference type="ChEBI" id="CHEBI:58121"/>
    </ligand>
</feature>
<feature type="binding site" evidence="1">
    <location>
        <position position="29"/>
    </location>
    <ligand>
        <name>Mg(2+)</name>
        <dbReference type="ChEBI" id="CHEBI:18420"/>
        <label>1</label>
    </ligand>
</feature>
<feature type="binding site" evidence="1">
    <location>
        <position position="29"/>
    </location>
    <ligand>
        <name>Mg(2+)</name>
        <dbReference type="ChEBI" id="CHEBI:18420"/>
        <label>2</label>
    </ligand>
</feature>
<feature type="binding site" evidence="1">
    <location>
        <position position="33"/>
    </location>
    <ligand>
        <name>D-ribulose 5-phosphate</name>
        <dbReference type="ChEBI" id="CHEBI:58121"/>
    </ligand>
</feature>
<feature type="binding site" evidence="1">
    <location>
        <begin position="141"/>
        <end position="145"/>
    </location>
    <ligand>
        <name>D-ribulose 5-phosphate</name>
        <dbReference type="ChEBI" id="CHEBI:58121"/>
    </ligand>
</feature>
<feature type="binding site" evidence="1">
    <location>
        <position position="144"/>
    </location>
    <ligand>
        <name>Mg(2+)</name>
        <dbReference type="ChEBI" id="CHEBI:18420"/>
        <label>2</label>
    </ligand>
</feature>
<feature type="binding site" evidence="1">
    <location>
        <position position="165"/>
    </location>
    <ligand>
        <name>D-ribulose 5-phosphate</name>
        <dbReference type="ChEBI" id="CHEBI:58121"/>
    </ligand>
</feature>
<feature type="binding site" evidence="1">
    <location>
        <begin position="259"/>
        <end position="263"/>
    </location>
    <ligand>
        <name>GTP</name>
        <dbReference type="ChEBI" id="CHEBI:37565"/>
    </ligand>
</feature>
<feature type="binding site" evidence="1">
    <location>
        <position position="264"/>
    </location>
    <ligand>
        <name>Zn(2+)</name>
        <dbReference type="ChEBI" id="CHEBI:29105"/>
        <note>catalytic</note>
    </ligand>
</feature>
<feature type="binding site" evidence="1">
    <location>
        <position position="275"/>
    </location>
    <ligand>
        <name>Zn(2+)</name>
        <dbReference type="ChEBI" id="CHEBI:29105"/>
        <note>catalytic</note>
    </ligand>
</feature>
<feature type="binding site" evidence="1">
    <location>
        <position position="277"/>
    </location>
    <ligand>
        <name>Zn(2+)</name>
        <dbReference type="ChEBI" id="CHEBI:29105"/>
        <note>catalytic</note>
    </ligand>
</feature>
<feature type="binding site" evidence="1">
    <location>
        <position position="280"/>
    </location>
    <ligand>
        <name>GTP</name>
        <dbReference type="ChEBI" id="CHEBI:37565"/>
    </ligand>
</feature>
<feature type="binding site" evidence="1">
    <location>
        <begin position="303"/>
        <end position="305"/>
    </location>
    <ligand>
        <name>GTP</name>
        <dbReference type="ChEBI" id="CHEBI:37565"/>
    </ligand>
</feature>
<feature type="binding site" evidence="1">
    <location>
        <position position="325"/>
    </location>
    <ligand>
        <name>GTP</name>
        <dbReference type="ChEBI" id="CHEBI:37565"/>
    </ligand>
</feature>
<feature type="binding site" evidence="1">
    <location>
        <position position="360"/>
    </location>
    <ligand>
        <name>GTP</name>
        <dbReference type="ChEBI" id="CHEBI:37565"/>
    </ligand>
</feature>
<feature type="binding site" evidence="1">
    <location>
        <position position="365"/>
    </location>
    <ligand>
        <name>GTP</name>
        <dbReference type="ChEBI" id="CHEBI:37565"/>
    </ligand>
</feature>
<feature type="site" description="Essential for DHBP synthase activity" evidence="1">
    <location>
        <position position="127"/>
    </location>
</feature>
<feature type="site" description="Essential for DHBP synthase activity" evidence="1">
    <location>
        <position position="165"/>
    </location>
</feature>
<evidence type="ECO:0000255" key="1">
    <source>
        <dbReference type="HAMAP-Rule" id="MF_01283"/>
    </source>
</evidence>
<accession>B1MCA4</accession>
<protein>
    <recommendedName>
        <fullName evidence="1">Riboflavin biosynthesis protein RibBA</fullName>
    </recommendedName>
    <domain>
        <recommendedName>
            <fullName evidence="1">3,4-dihydroxy-2-butanone 4-phosphate synthase</fullName>
            <shortName evidence="1">DHBP synthase</shortName>
            <ecNumber evidence="1">4.1.99.12</ecNumber>
        </recommendedName>
    </domain>
    <domain>
        <recommendedName>
            <fullName evidence="1">GTP cyclohydrolase-2</fullName>
            <ecNumber evidence="1">3.5.4.25</ecNumber>
        </recommendedName>
        <alternativeName>
            <fullName evidence="1">GTP cyclohydrolase II</fullName>
        </alternativeName>
    </domain>
</protein>
<name>RIBBA_MYCA9</name>
<gene>
    <name evidence="1" type="primary">ribBA</name>
    <name type="ordered locus">MAB_2796c</name>
</gene>
<organism>
    <name type="scientific">Mycobacteroides abscessus (strain ATCC 19977 / DSM 44196 / CCUG 20993 / CIP 104536 / JCM 13569 / NCTC 13031 / TMC 1543 / L948)</name>
    <name type="common">Mycobacterium abscessus</name>
    <dbReference type="NCBI Taxonomy" id="561007"/>
    <lineage>
        <taxon>Bacteria</taxon>
        <taxon>Bacillati</taxon>
        <taxon>Actinomycetota</taxon>
        <taxon>Actinomycetes</taxon>
        <taxon>Mycobacteriales</taxon>
        <taxon>Mycobacteriaceae</taxon>
        <taxon>Mycobacteroides</taxon>
        <taxon>Mycobacteroides abscessus</taxon>
    </lineage>
</organism>